<dbReference type="EC" id="2.4.-.-"/>
<dbReference type="EMBL" id="CP000046">
    <property type="protein sequence ID" value="AAW37761.1"/>
    <property type="molecule type" value="Genomic_DNA"/>
</dbReference>
<dbReference type="RefSeq" id="WP_001212874.1">
    <property type="nucleotide sequence ID" value="NZ_JBGOFO010000005.1"/>
</dbReference>
<dbReference type="SMR" id="Q5HI28"/>
<dbReference type="CAZy" id="GT2">
    <property type="family name" value="Glycosyltransferase Family 2"/>
</dbReference>
<dbReference type="KEGG" id="sac:SACOL0697"/>
<dbReference type="HOGENOM" id="CLU_067098_0_0_9"/>
<dbReference type="Proteomes" id="UP000000530">
    <property type="component" value="Chromosome"/>
</dbReference>
<dbReference type="GO" id="GO:0016757">
    <property type="term" value="F:glycosyltransferase activity"/>
    <property type="evidence" value="ECO:0007669"/>
    <property type="project" value="UniProtKB-KW"/>
</dbReference>
<dbReference type="GO" id="GO:0071555">
    <property type="term" value="P:cell wall organization"/>
    <property type="evidence" value="ECO:0007669"/>
    <property type="project" value="UniProtKB-KW"/>
</dbReference>
<dbReference type="GO" id="GO:0008360">
    <property type="term" value="P:regulation of cell shape"/>
    <property type="evidence" value="ECO:0007669"/>
    <property type="project" value="UniProtKB-KW"/>
</dbReference>
<dbReference type="GO" id="GO:0019350">
    <property type="term" value="P:teichoic acid biosynthetic process"/>
    <property type="evidence" value="ECO:0007669"/>
    <property type="project" value="UniProtKB-KW"/>
</dbReference>
<dbReference type="CDD" id="cd00761">
    <property type="entry name" value="Glyco_tranf_GTA_type"/>
    <property type="match status" value="1"/>
</dbReference>
<dbReference type="Gene3D" id="3.90.550.10">
    <property type="entry name" value="Spore Coat Polysaccharide Biosynthesis Protein SpsA, Chain A"/>
    <property type="match status" value="1"/>
</dbReference>
<dbReference type="InterPro" id="IPR001173">
    <property type="entry name" value="Glyco_trans_2-like"/>
</dbReference>
<dbReference type="InterPro" id="IPR050834">
    <property type="entry name" value="Glycosyltransf_2"/>
</dbReference>
<dbReference type="InterPro" id="IPR029044">
    <property type="entry name" value="Nucleotide-diphossugar_trans"/>
</dbReference>
<dbReference type="PANTHER" id="PTHR43685">
    <property type="entry name" value="GLYCOSYLTRANSFERASE"/>
    <property type="match status" value="1"/>
</dbReference>
<dbReference type="PANTHER" id="PTHR43685:SF11">
    <property type="entry name" value="GLYCOSYLTRANSFERASE TAGX-RELATED"/>
    <property type="match status" value="1"/>
</dbReference>
<dbReference type="Pfam" id="PF00535">
    <property type="entry name" value="Glycos_transf_2"/>
    <property type="match status" value="1"/>
</dbReference>
<dbReference type="SUPFAM" id="SSF53448">
    <property type="entry name" value="Nucleotide-diphospho-sugar transferases"/>
    <property type="match status" value="1"/>
</dbReference>
<evidence type="ECO:0000305" key="1"/>
<accession>Q5HI28</accession>
<organism>
    <name type="scientific">Staphylococcus aureus (strain COL)</name>
    <dbReference type="NCBI Taxonomy" id="93062"/>
    <lineage>
        <taxon>Bacteria</taxon>
        <taxon>Bacillati</taxon>
        <taxon>Bacillota</taxon>
        <taxon>Bacilli</taxon>
        <taxon>Bacillales</taxon>
        <taxon>Staphylococcaceae</taxon>
        <taxon>Staphylococcus</taxon>
    </lineage>
</organism>
<sequence length="353" mass="41139">MRFTIIIPTCNNEATIRQLLISIESKEHYRILCIDGGSTDQTIPMIERLQRELKHISLIQLQNASIATCINKGLMDIKMTDPHDSDAFMVIKPTSIVLPGKLDRLTAAFKNNDNIDMVIGQRAYNYHGEWKLKSADEFIKDNRIVTLTEQPDLLSMMSFDGKLFSAKFAELQCDETLANTYNHAILVKAMQKATDIHLVSQMIVGDNDIDTHATSNDEDFNRYITEIMKIRQRVMEMLLLPEQRLLYSDMVDRILFNNSLKYYMNEHPAVTHTTIQLVKDYIMSMQHSDYVSQNMFDIINTVEFIGENWDREIYELWRQTLIQVGINRPTYKKFLIQLKGRKFAHRTKSMLKR</sequence>
<protein>
    <recommendedName>
        <fullName>Putative glycosyltransferase TagX</fullName>
        <ecNumber>2.4.-.-</ecNumber>
    </recommendedName>
    <alternativeName>
        <fullName>Teichoic acid biosynthesis protein X</fullName>
    </alternativeName>
</protein>
<gene>
    <name type="primary">tagX</name>
    <name type="ordered locus">SACOL0697</name>
</gene>
<comment type="similarity">
    <text evidence="1">Belongs to the glycosyltransferase 2 family.</text>
</comment>
<feature type="chain" id="PRO_0000059223" description="Putative glycosyltransferase TagX">
    <location>
        <begin position="1"/>
        <end position="353"/>
    </location>
</feature>
<name>TAGX_STAAC</name>
<reference key="1">
    <citation type="journal article" date="2005" name="J. Bacteriol.">
        <title>Insights on evolution of virulence and resistance from the complete genome analysis of an early methicillin-resistant Staphylococcus aureus strain and a biofilm-producing methicillin-resistant Staphylococcus epidermidis strain.</title>
        <authorList>
            <person name="Gill S.R."/>
            <person name="Fouts D.E."/>
            <person name="Archer G.L."/>
            <person name="Mongodin E.F."/>
            <person name="DeBoy R.T."/>
            <person name="Ravel J."/>
            <person name="Paulsen I.T."/>
            <person name="Kolonay J.F."/>
            <person name="Brinkac L.M."/>
            <person name="Beanan M.J."/>
            <person name="Dodson R.J."/>
            <person name="Daugherty S.C."/>
            <person name="Madupu R."/>
            <person name="Angiuoli S.V."/>
            <person name="Durkin A.S."/>
            <person name="Haft D.H."/>
            <person name="Vamathevan J.J."/>
            <person name="Khouri H."/>
            <person name="Utterback T.R."/>
            <person name="Lee C."/>
            <person name="Dimitrov G."/>
            <person name="Jiang L."/>
            <person name="Qin H."/>
            <person name="Weidman J."/>
            <person name="Tran K."/>
            <person name="Kang K.H."/>
            <person name="Hance I.R."/>
            <person name="Nelson K.E."/>
            <person name="Fraser C.M."/>
        </authorList>
    </citation>
    <scope>NUCLEOTIDE SEQUENCE [LARGE SCALE GENOMIC DNA]</scope>
    <source>
        <strain>COL</strain>
    </source>
</reference>
<keyword id="KW-0133">Cell shape</keyword>
<keyword id="KW-0961">Cell wall biogenesis/degradation</keyword>
<keyword id="KW-0328">Glycosyltransferase</keyword>
<keyword id="KW-0777">Teichoic acid biosynthesis</keyword>
<keyword id="KW-0808">Transferase</keyword>
<proteinExistence type="inferred from homology"/>